<dbReference type="EC" id="6.3.4.2" evidence="1"/>
<dbReference type="EMBL" id="AE008917">
    <property type="protein sequence ID" value="AAL52030.1"/>
    <property type="molecule type" value="Genomic_DNA"/>
</dbReference>
<dbReference type="PIR" id="AC3358">
    <property type="entry name" value="AC3358"/>
</dbReference>
<dbReference type="RefSeq" id="WP_004683844.1">
    <property type="nucleotide sequence ID" value="NC_003317.1"/>
</dbReference>
<dbReference type="SMR" id="Q8YHF2"/>
<dbReference type="GeneID" id="29593671"/>
<dbReference type="KEGG" id="bme:BMEI0849"/>
<dbReference type="KEGG" id="bmel:DK63_571"/>
<dbReference type="PATRIC" id="fig|224914.52.peg.594"/>
<dbReference type="eggNOG" id="COG0504">
    <property type="taxonomic scope" value="Bacteria"/>
</dbReference>
<dbReference type="PhylomeDB" id="Q8YHF2"/>
<dbReference type="UniPathway" id="UPA00159">
    <property type="reaction ID" value="UER00277"/>
</dbReference>
<dbReference type="Proteomes" id="UP000000419">
    <property type="component" value="Chromosome I"/>
</dbReference>
<dbReference type="GO" id="GO:0005829">
    <property type="term" value="C:cytosol"/>
    <property type="evidence" value="ECO:0007669"/>
    <property type="project" value="TreeGrafter"/>
</dbReference>
<dbReference type="GO" id="GO:0005524">
    <property type="term" value="F:ATP binding"/>
    <property type="evidence" value="ECO:0007669"/>
    <property type="project" value="UniProtKB-KW"/>
</dbReference>
<dbReference type="GO" id="GO:0003883">
    <property type="term" value="F:CTP synthase activity"/>
    <property type="evidence" value="ECO:0007669"/>
    <property type="project" value="UniProtKB-UniRule"/>
</dbReference>
<dbReference type="GO" id="GO:0004359">
    <property type="term" value="F:glutaminase activity"/>
    <property type="evidence" value="ECO:0007669"/>
    <property type="project" value="RHEA"/>
</dbReference>
<dbReference type="GO" id="GO:0042802">
    <property type="term" value="F:identical protein binding"/>
    <property type="evidence" value="ECO:0007669"/>
    <property type="project" value="TreeGrafter"/>
</dbReference>
<dbReference type="GO" id="GO:0046872">
    <property type="term" value="F:metal ion binding"/>
    <property type="evidence" value="ECO:0007669"/>
    <property type="project" value="UniProtKB-KW"/>
</dbReference>
<dbReference type="GO" id="GO:0044210">
    <property type="term" value="P:'de novo' CTP biosynthetic process"/>
    <property type="evidence" value="ECO:0007669"/>
    <property type="project" value="UniProtKB-UniRule"/>
</dbReference>
<dbReference type="GO" id="GO:0019856">
    <property type="term" value="P:pyrimidine nucleobase biosynthetic process"/>
    <property type="evidence" value="ECO:0007669"/>
    <property type="project" value="TreeGrafter"/>
</dbReference>
<dbReference type="CDD" id="cd03113">
    <property type="entry name" value="CTPS_N"/>
    <property type="match status" value="1"/>
</dbReference>
<dbReference type="CDD" id="cd01746">
    <property type="entry name" value="GATase1_CTP_Synthase"/>
    <property type="match status" value="1"/>
</dbReference>
<dbReference type="FunFam" id="3.40.50.300:FF:000009">
    <property type="entry name" value="CTP synthase"/>
    <property type="match status" value="1"/>
</dbReference>
<dbReference type="FunFam" id="3.40.50.880:FF:000002">
    <property type="entry name" value="CTP synthase"/>
    <property type="match status" value="1"/>
</dbReference>
<dbReference type="Gene3D" id="3.40.50.880">
    <property type="match status" value="1"/>
</dbReference>
<dbReference type="Gene3D" id="3.40.50.300">
    <property type="entry name" value="P-loop containing nucleotide triphosphate hydrolases"/>
    <property type="match status" value="1"/>
</dbReference>
<dbReference type="HAMAP" id="MF_01227">
    <property type="entry name" value="PyrG"/>
    <property type="match status" value="1"/>
</dbReference>
<dbReference type="InterPro" id="IPR029062">
    <property type="entry name" value="Class_I_gatase-like"/>
</dbReference>
<dbReference type="InterPro" id="IPR004468">
    <property type="entry name" value="CTP_synthase"/>
</dbReference>
<dbReference type="InterPro" id="IPR017456">
    <property type="entry name" value="CTP_synthase_N"/>
</dbReference>
<dbReference type="InterPro" id="IPR017926">
    <property type="entry name" value="GATASE"/>
</dbReference>
<dbReference type="InterPro" id="IPR033828">
    <property type="entry name" value="GATase1_CTP_Synthase"/>
</dbReference>
<dbReference type="InterPro" id="IPR027417">
    <property type="entry name" value="P-loop_NTPase"/>
</dbReference>
<dbReference type="NCBIfam" id="NF003792">
    <property type="entry name" value="PRK05380.1"/>
    <property type="match status" value="1"/>
</dbReference>
<dbReference type="NCBIfam" id="TIGR00337">
    <property type="entry name" value="PyrG"/>
    <property type="match status" value="1"/>
</dbReference>
<dbReference type="PANTHER" id="PTHR11550">
    <property type="entry name" value="CTP SYNTHASE"/>
    <property type="match status" value="1"/>
</dbReference>
<dbReference type="PANTHER" id="PTHR11550:SF0">
    <property type="entry name" value="CTP SYNTHASE-RELATED"/>
    <property type="match status" value="1"/>
</dbReference>
<dbReference type="Pfam" id="PF06418">
    <property type="entry name" value="CTP_synth_N"/>
    <property type="match status" value="1"/>
</dbReference>
<dbReference type="Pfam" id="PF00117">
    <property type="entry name" value="GATase"/>
    <property type="match status" value="1"/>
</dbReference>
<dbReference type="SUPFAM" id="SSF52317">
    <property type="entry name" value="Class I glutamine amidotransferase-like"/>
    <property type="match status" value="1"/>
</dbReference>
<dbReference type="SUPFAM" id="SSF52540">
    <property type="entry name" value="P-loop containing nucleoside triphosphate hydrolases"/>
    <property type="match status" value="1"/>
</dbReference>
<dbReference type="PROSITE" id="PS51273">
    <property type="entry name" value="GATASE_TYPE_1"/>
    <property type="match status" value="1"/>
</dbReference>
<organism>
    <name type="scientific">Brucella melitensis biotype 1 (strain ATCC 23456 / CCUG 17765 / NCTC 10094 / 16M)</name>
    <dbReference type="NCBI Taxonomy" id="224914"/>
    <lineage>
        <taxon>Bacteria</taxon>
        <taxon>Pseudomonadati</taxon>
        <taxon>Pseudomonadota</taxon>
        <taxon>Alphaproteobacteria</taxon>
        <taxon>Hyphomicrobiales</taxon>
        <taxon>Brucellaceae</taxon>
        <taxon>Brucella/Ochrobactrum group</taxon>
        <taxon>Brucella</taxon>
    </lineage>
</organism>
<keyword id="KW-0067">ATP-binding</keyword>
<keyword id="KW-0315">Glutamine amidotransferase</keyword>
<keyword id="KW-0436">Ligase</keyword>
<keyword id="KW-0460">Magnesium</keyword>
<keyword id="KW-0479">Metal-binding</keyword>
<keyword id="KW-0547">Nucleotide-binding</keyword>
<keyword id="KW-0665">Pyrimidine biosynthesis</keyword>
<protein>
    <recommendedName>
        <fullName evidence="1">CTP synthase</fullName>
        <ecNumber evidence="1">6.3.4.2</ecNumber>
    </recommendedName>
    <alternativeName>
        <fullName evidence="1">Cytidine 5'-triphosphate synthase</fullName>
    </alternativeName>
    <alternativeName>
        <fullName evidence="1">Cytidine triphosphate synthetase</fullName>
        <shortName evidence="1">CTP synthetase</shortName>
        <shortName evidence="1">CTPS</shortName>
    </alternativeName>
    <alternativeName>
        <fullName evidence="1">UTP--ammonia ligase</fullName>
    </alternativeName>
</protein>
<feature type="chain" id="PRO_0000138167" description="CTP synthase">
    <location>
        <begin position="1"/>
        <end position="542"/>
    </location>
</feature>
<feature type="domain" description="Glutamine amidotransferase type-1" evidence="1">
    <location>
        <begin position="291"/>
        <end position="541"/>
    </location>
</feature>
<feature type="region of interest" description="Amidoligase domain" evidence="1">
    <location>
        <begin position="1"/>
        <end position="265"/>
    </location>
</feature>
<feature type="active site" description="Nucleophile; for glutamine hydrolysis" evidence="1">
    <location>
        <position position="380"/>
    </location>
</feature>
<feature type="active site" evidence="1">
    <location>
        <position position="514"/>
    </location>
</feature>
<feature type="active site" evidence="1">
    <location>
        <position position="516"/>
    </location>
</feature>
<feature type="binding site" evidence="1">
    <location>
        <position position="13"/>
    </location>
    <ligand>
        <name>CTP</name>
        <dbReference type="ChEBI" id="CHEBI:37563"/>
        <note>allosteric inhibitor</note>
    </ligand>
</feature>
<feature type="binding site" evidence="1">
    <location>
        <position position="13"/>
    </location>
    <ligand>
        <name>UTP</name>
        <dbReference type="ChEBI" id="CHEBI:46398"/>
    </ligand>
</feature>
<feature type="binding site" evidence="1">
    <location>
        <begin position="14"/>
        <end position="19"/>
    </location>
    <ligand>
        <name>ATP</name>
        <dbReference type="ChEBI" id="CHEBI:30616"/>
    </ligand>
</feature>
<feature type="binding site" evidence="1">
    <location>
        <position position="54"/>
    </location>
    <ligand>
        <name>L-glutamine</name>
        <dbReference type="ChEBI" id="CHEBI:58359"/>
    </ligand>
</feature>
<feature type="binding site" evidence="1">
    <location>
        <position position="71"/>
    </location>
    <ligand>
        <name>ATP</name>
        <dbReference type="ChEBI" id="CHEBI:30616"/>
    </ligand>
</feature>
<feature type="binding site" evidence="1">
    <location>
        <position position="71"/>
    </location>
    <ligand>
        <name>Mg(2+)</name>
        <dbReference type="ChEBI" id="CHEBI:18420"/>
    </ligand>
</feature>
<feature type="binding site" evidence="1">
    <location>
        <position position="139"/>
    </location>
    <ligand>
        <name>Mg(2+)</name>
        <dbReference type="ChEBI" id="CHEBI:18420"/>
    </ligand>
</feature>
<feature type="binding site" evidence="1">
    <location>
        <begin position="146"/>
        <end position="148"/>
    </location>
    <ligand>
        <name>CTP</name>
        <dbReference type="ChEBI" id="CHEBI:37563"/>
        <note>allosteric inhibitor</note>
    </ligand>
</feature>
<feature type="binding site" evidence="1">
    <location>
        <begin position="186"/>
        <end position="191"/>
    </location>
    <ligand>
        <name>CTP</name>
        <dbReference type="ChEBI" id="CHEBI:37563"/>
        <note>allosteric inhibitor</note>
    </ligand>
</feature>
<feature type="binding site" evidence="1">
    <location>
        <begin position="186"/>
        <end position="191"/>
    </location>
    <ligand>
        <name>UTP</name>
        <dbReference type="ChEBI" id="CHEBI:46398"/>
    </ligand>
</feature>
<feature type="binding site" evidence="1">
    <location>
        <position position="222"/>
    </location>
    <ligand>
        <name>CTP</name>
        <dbReference type="ChEBI" id="CHEBI:37563"/>
        <note>allosteric inhibitor</note>
    </ligand>
</feature>
<feature type="binding site" evidence="1">
    <location>
        <position position="222"/>
    </location>
    <ligand>
        <name>UTP</name>
        <dbReference type="ChEBI" id="CHEBI:46398"/>
    </ligand>
</feature>
<feature type="binding site" evidence="1">
    <location>
        <position position="353"/>
    </location>
    <ligand>
        <name>L-glutamine</name>
        <dbReference type="ChEBI" id="CHEBI:58359"/>
    </ligand>
</feature>
<feature type="binding site" evidence="1">
    <location>
        <begin position="381"/>
        <end position="384"/>
    </location>
    <ligand>
        <name>L-glutamine</name>
        <dbReference type="ChEBI" id="CHEBI:58359"/>
    </ligand>
</feature>
<feature type="binding site" evidence="1">
    <location>
        <position position="404"/>
    </location>
    <ligand>
        <name>L-glutamine</name>
        <dbReference type="ChEBI" id="CHEBI:58359"/>
    </ligand>
</feature>
<feature type="binding site" evidence="1">
    <location>
        <position position="469"/>
    </location>
    <ligand>
        <name>L-glutamine</name>
        <dbReference type="ChEBI" id="CHEBI:58359"/>
    </ligand>
</feature>
<reference key="1">
    <citation type="journal article" date="2002" name="Proc. Natl. Acad. Sci. U.S.A.">
        <title>The genome sequence of the facultative intracellular pathogen Brucella melitensis.</title>
        <authorList>
            <person name="DelVecchio V.G."/>
            <person name="Kapatral V."/>
            <person name="Redkar R.J."/>
            <person name="Patra G."/>
            <person name="Mujer C."/>
            <person name="Los T."/>
            <person name="Ivanova N."/>
            <person name="Anderson I."/>
            <person name="Bhattacharyya A."/>
            <person name="Lykidis A."/>
            <person name="Reznik G."/>
            <person name="Jablonski L."/>
            <person name="Larsen N."/>
            <person name="D'Souza M."/>
            <person name="Bernal A."/>
            <person name="Mazur M."/>
            <person name="Goltsman E."/>
            <person name="Selkov E."/>
            <person name="Elzer P.H."/>
            <person name="Hagius S."/>
            <person name="O'Callaghan D."/>
            <person name="Letesson J.-J."/>
            <person name="Haselkorn R."/>
            <person name="Kyrpides N.C."/>
            <person name="Overbeek R."/>
        </authorList>
    </citation>
    <scope>NUCLEOTIDE SEQUENCE [LARGE SCALE GENOMIC DNA]</scope>
    <source>
        <strain>ATCC 23456 / CCUG 17765 / NCTC 10094 / 16M</strain>
    </source>
</reference>
<name>PYRG_BRUME</name>
<accession>Q8YHF2</accession>
<sequence>MARYVFITGGVVSSLGKGIAAAALAALLQARGYRVRIRKLDPYLNVDPGTMSPYQHGEVFVTDDGAETDLDLGHYERFTGRPANQQDNITTGRIYRNIIEKERRGDYLGATVQVIPHVTDEIKNFVLEGNEDYDFVLCEIGGTVGDIEAMPFLEAIRQLGNELPRGTAVYIHLTLMPYIPAAGELKTKPTQHSVKELRSIGIAPDILLVRADREIPESERRKLSLFCNVRESAVIQALDVATIYDVPIAYHKEGLDSEVLSAFGIDPAPKPRMDRWEEVSHRLHNPEGEVTIAVVGKYTGLKDAYKSLIEALHHGGLANKVKVNLDWIEAEVFESEDPAPYLEKVHGILVPGGFGERGAEGKILAAKFARERKVPYFGICFGMQMACIEAARNLVGIEDASSSEFDPTREPVVGLMTEWLKGNMLEKRAAAGDLGGTMRLGAYEAVLKPDSKIAQIYGSTDIHERHRHRYEVNIDYKDRLEAAGLNFAGMSPDGVLPETVEYADHPWFIGVQYHPELKSRPFEPHPLFASFIEAAIEQSRLV</sequence>
<proteinExistence type="inferred from homology"/>
<evidence type="ECO:0000255" key="1">
    <source>
        <dbReference type="HAMAP-Rule" id="MF_01227"/>
    </source>
</evidence>
<gene>
    <name evidence="1" type="primary">pyrG</name>
    <name type="ordered locus">BMEI0849</name>
</gene>
<comment type="function">
    <text evidence="1">Catalyzes the ATP-dependent amination of UTP to CTP with either L-glutamine or ammonia as the source of nitrogen. Regulates intracellular CTP levels through interactions with the four ribonucleotide triphosphates.</text>
</comment>
<comment type="catalytic activity">
    <reaction evidence="1">
        <text>UTP + L-glutamine + ATP + H2O = CTP + L-glutamate + ADP + phosphate + 2 H(+)</text>
        <dbReference type="Rhea" id="RHEA:26426"/>
        <dbReference type="ChEBI" id="CHEBI:15377"/>
        <dbReference type="ChEBI" id="CHEBI:15378"/>
        <dbReference type="ChEBI" id="CHEBI:29985"/>
        <dbReference type="ChEBI" id="CHEBI:30616"/>
        <dbReference type="ChEBI" id="CHEBI:37563"/>
        <dbReference type="ChEBI" id="CHEBI:43474"/>
        <dbReference type="ChEBI" id="CHEBI:46398"/>
        <dbReference type="ChEBI" id="CHEBI:58359"/>
        <dbReference type="ChEBI" id="CHEBI:456216"/>
        <dbReference type="EC" id="6.3.4.2"/>
    </reaction>
</comment>
<comment type="catalytic activity">
    <reaction evidence="1">
        <text>L-glutamine + H2O = L-glutamate + NH4(+)</text>
        <dbReference type="Rhea" id="RHEA:15889"/>
        <dbReference type="ChEBI" id="CHEBI:15377"/>
        <dbReference type="ChEBI" id="CHEBI:28938"/>
        <dbReference type="ChEBI" id="CHEBI:29985"/>
        <dbReference type="ChEBI" id="CHEBI:58359"/>
    </reaction>
</comment>
<comment type="catalytic activity">
    <reaction evidence="1">
        <text>UTP + NH4(+) + ATP = CTP + ADP + phosphate + 2 H(+)</text>
        <dbReference type="Rhea" id="RHEA:16597"/>
        <dbReference type="ChEBI" id="CHEBI:15378"/>
        <dbReference type="ChEBI" id="CHEBI:28938"/>
        <dbReference type="ChEBI" id="CHEBI:30616"/>
        <dbReference type="ChEBI" id="CHEBI:37563"/>
        <dbReference type="ChEBI" id="CHEBI:43474"/>
        <dbReference type="ChEBI" id="CHEBI:46398"/>
        <dbReference type="ChEBI" id="CHEBI:456216"/>
    </reaction>
</comment>
<comment type="activity regulation">
    <text evidence="1">Allosterically activated by GTP, when glutamine is the substrate; GTP has no effect on the reaction when ammonia is the substrate. The allosteric effector GTP functions by stabilizing the protein conformation that binds the tetrahedral intermediate(s) formed during glutamine hydrolysis. Inhibited by the product CTP, via allosteric rather than competitive inhibition.</text>
</comment>
<comment type="pathway">
    <text evidence="1">Pyrimidine metabolism; CTP biosynthesis via de novo pathway; CTP from UDP: step 2/2.</text>
</comment>
<comment type="subunit">
    <text evidence="1">Homotetramer.</text>
</comment>
<comment type="miscellaneous">
    <text evidence="1">CTPSs have evolved a hybrid strategy for distinguishing between UTP and CTP. The overlapping regions of the product feedback inhibitory and substrate sites recognize a common feature in both compounds, the triphosphate moiety. To differentiate isosteric substrate and product pyrimidine rings, an additional pocket far from the expected kinase/ligase catalytic site, specifically recognizes the cytosine and ribose portions of the product inhibitor.</text>
</comment>
<comment type="similarity">
    <text evidence="1">Belongs to the CTP synthase family.</text>
</comment>